<accession>Q09WW0</accession>
<organism>
    <name type="scientific">Morus indica</name>
    <name type="common">Mulberry</name>
    <dbReference type="NCBI Taxonomy" id="248361"/>
    <lineage>
        <taxon>Eukaryota</taxon>
        <taxon>Viridiplantae</taxon>
        <taxon>Streptophyta</taxon>
        <taxon>Embryophyta</taxon>
        <taxon>Tracheophyta</taxon>
        <taxon>Spermatophyta</taxon>
        <taxon>Magnoliopsida</taxon>
        <taxon>eudicotyledons</taxon>
        <taxon>Gunneridae</taxon>
        <taxon>Pentapetalae</taxon>
        <taxon>rosids</taxon>
        <taxon>fabids</taxon>
        <taxon>Rosales</taxon>
        <taxon>Moraceae</taxon>
        <taxon>Moreae</taxon>
        <taxon>Morus</taxon>
    </lineage>
</organism>
<evidence type="ECO:0000250" key="1">
    <source>
        <dbReference type="UniProtKB" id="P56785"/>
    </source>
</evidence>
<evidence type="ECO:0000255" key="2"/>
<evidence type="ECO:0000256" key="3">
    <source>
        <dbReference type="SAM" id="MobiDB-lite"/>
    </source>
</evidence>
<evidence type="ECO:0000305" key="4"/>
<proteinExistence type="inferred from homology"/>
<protein>
    <recommendedName>
        <fullName evidence="1">Protein TIC 214</fullName>
    </recommendedName>
    <alternativeName>
        <fullName evidence="1">Translocon at the inner envelope membrane of chloroplasts 214</fullName>
        <shortName evidence="1">AtTIC214</shortName>
    </alternativeName>
</protein>
<reference key="1">
    <citation type="submission" date="2005-09" db="EMBL/GenBank/DDBJ databases">
        <title>The chloroplast genome of mulberry: structural features and comparative analysis.</title>
        <authorList>
            <person name="Ravi V."/>
            <person name="Khurana J.P."/>
            <person name="Tyagi A.K."/>
            <person name="Khurana P."/>
        </authorList>
    </citation>
    <scope>NUCLEOTIDE SEQUENCE [LARGE SCALE GENOMIC DNA]</scope>
    <source>
        <strain>cv. K2</strain>
    </source>
</reference>
<keyword id="KW-0150">Chloroplast</keyword>
<keyword id="KW-0472">Membrane</keyword>
<keyword id="KW-0934">Plastid</keyword>
<keyword id="KW-1001">Plastid inner membrane</keyword>
<keyword id="KW-0653">Protein transport</keyword>
<keyword id="KW-0812">Transmembrane</keyword>
<keyword id="KW-1133">Transmembrane helix</keyword>
<keyword id="KW-0813">Transport</keyword>
<feature type="chain" id="PRO_0000262615" description="Protein TIC 214">
    <location>
        <begin position="1"/>
        <end position="1879"/>
    </location>
</feature>
<feature type="transmembrane region" description="Helical" evidence="2">
    <location>
        <begin position="18"/>
        <end position="38"/>
    </location>
</feature>
<feature type="transmembrane region" description="Helical" evidence="2">
    <location>
        <begin position="67"/>
        <end position="87"/>
    </location>
</feature>
<feature type="transmembrane region" description="Helical" evidence="2">
    <location>
        <begin position="90"/>
        <end position="110"/>
    </location>
</feature>
<feature type="transmembrane region" description="Helical" evidence="2">
    <location>
        <begin position="127"/>
        <end position="147"/>
    </location>
</feature>
<feature type="transmembrane region" description="Helical" evidence="2">
    <location>
        <begin position="175"/>
        <end position="195"/>
    </location>
</feature>
<feature type="transmembrane region" description="Helical" evidence="2">
    <location>
        <begin position="218"/>
        <end position="238"/>
    </location>
</feature>
<feature type="region of interest" description="Disordered" evidence="3">
    <location>
        <begin position="243"/>
        <end position="291"/>
    </location>
</feature>
<feature type="compositionally biased region" description="Basic and acidic residues" evidence="3">
    <location>
        <begin position="257"/>
        <end position="271"/>
    </location>
</feature>
<dbReference type="EMBL" id="DQ226511">
    <property type="protein sequence ID" value="ABB21014.1"/>
    <property type="molecule type" value="Genomic_DNA"/>
</dbReference>
<dbReference type="RefSeq" id="YP_762318.1">
    <property type="nucleotide sequence ID" value="NC_008359.1"/>
</dbReference>
<dbReference type="GeneID" id="4290615"/>
<dbReference type="GO" id="GO:0009706">
    <property type="term" value="C:chloroplast inner membrane"/>
    <property type="evidence" value="ECO:0007669"/>
    <property type="project" value="UniProtKB-SubCell"/>
</dbReference>
<dbReference type="GO" id="GO:0015031">
    <property type="term" value="P:protein transport"/>
    <property type="evidence" value="ECO:0007669"/>
    <property type="project" value="UniProtKB-KW"/>
</dbReference>
<dbReference type="InterPro" id="IPR008896">
    <property type="entry name" value="TIC214"/>
</dbReference>
<dbReference type="PANTHER" id="PTHR33163:SF40">
    <property type="entry name" value="PROTEIN TIC 214"/>
    <property type="match status" value="1"/>
</dbReference>
<dbReference type="PANTHER" id="PTHR33163">
    <property type="entry name" value="PROTEIN TIC 214-RELATED"/>
    <property type="match status" value="1"/>
</dbReference>
<dbReference type="Pfam" id="PF05758">
    <property type="entry name" value="Ycf1"/>
    <property type="match status" value="1"/>
</dbReference>
<comment type="function">
    <text evidence="1">Involved in protein precursor import into chloroplasts. May be part of an intermediate translocation complex acting as a protein-conducting channel at the inner envelope.</text>
</comment>
<comment type="subunit">
    <text evidence="1">Part of the Tic complex.</text>
</comment>
<comment type="subcellular location">
    <subcellularLocation>
        <location evidence="1">Plastid</location>
        <location evidence="1">Chloroplast inner membrane</location>
        <topology evidence="2">Multi-pass membrane protein</topology>
    </subcellularLocation>
</comment>
<comment type="similarity">
    <text evidence="4">Belongs to the TIC214 family.</text>
</comment>
<gene>
    <name evidence="1" type="primary">TIC214</name>
    <name type="synonym">ycf1</name>
    <name type="ordered locus">MoinCp079</name>
</gene>
<geneLocation type="chloroplast"/>
<name>TI214_MORIN</name>
<sequence length="1879" mass="225452">MIFQSFILGNLVSLCMKIINSVVVVGLYYGFLTTFSIGPSYLFLLRARVMEEGEEGTEKKVSATTGFITGQLMMFISIYYAPLHLALGRPHTITVLALPYLLFHFFWNNHKHFFDYGSTNRNSMRNLSIQCVFLNNLIFQLFNHFILPSSMLVRLVNIYMFRCNNKMLFVTSSFVGWLIGHILFMKWVGLVLVWIQQNNSIRSNKYLMSELRNFMVRIFSILLFITCVYYLGRIPSPILTKKLKETEERGESEEERDVEKTSETKGTKQEQEGSTEEDPSPSLFSEEKEDPEKIDFKETRYKNKPVYETYYLDVDRNQENSKLEIFKEKKELLWFEKPLVTILFDYKRWNRPFRYIKNDKFENAVKNEMSQYFFHTCESDGKKRISFTYPPSLSTFFEMIQRKMSLFTTDKLYSDELYNNWSYTNEQKRKNLNNKLINIIKDLDKALDSKFLILDVLEKRPRLCHDNTKKKYLPKVYDPFLNGAYRGQIKKRFSLSIKDKVSIQNYIERGWINKIHGLFLIINYLEFEEKKPFHRIDKRLLSTEMNFFLNLINEFNGKPTSSLNFKKFYLLPEHKQLRINLEGREKKIRFLFERFLTDPNNKTIRKQAIGIKEIRKKIPQWSYKLIDDLEQEEGENEEALGTDSQIRSRKCKRVLIFNHELENTNGYSNSQDTNNNDERDDIALIRYSQQSDFRRDIIKGSMRAQRRKTVIWKTFQANVHSLPFLDRIDKDVYFSFDMLRPIKKKFQHWLWKKPEFKISDYREKKSKDKKKEEEKRRENARIEIAETWDSIVVAQVIRGFVLVIQSILRKYIILPSLIIVKNIGRILLFQFPEWSEDVKDWKREVHVNCTYNGVQLAEKEFPKNWLIDGIQIKILFPFRLKPWHKSKLKLRNNYKDPMKKKEQQNDFCFLTVWGMETELPFGSPRKQLSFFEPIFKELKKRLIKLKKKCFRILIILKERTKLFLNVSKERKKWVIKNIVFLKKIIKELSKMNPILLVGLREIELYELSESKKEKNLIIDNELIHEPSINIQSTNWTTFSLTKKKIQDLTNRTNTTINQIQKISKDNKKGFLSPHINISSNKMSYNDKRLELPKNILQLLKRRNVRLIRKSNYFIKFFIERIYRNIFLFISNIPKINAQLFFYFFESLKKIVNKTSSYNNYIYNNERNQEKIDKTNQKITQFISTIKESLSNINNKNLETFCNLSYLSQAYVFYKLSQSRGFNFFNLYKLRLRSVFQYNGAFLFLKNEIKDYFLGTQKIFHSELRHKNIPNYEINQWKNCLRGYYQNNLSQSRLVPQKGINIVNQHSIAQNNHLNKYDSYEKNPLINSEKKNVKKKYRYDLLSYNFINYEDKKNSSIYGLPLQVNNNQEIFYNYTEHKRKLFNMLVGIPINNYLVEDNIIDIKNNPDRKNFDWIILNFCLRKKMDIRAWINMDTDANSNKYTKPRANNYQIIDKIDNKDLFYPTIHQNQEMNPSKKKLFDWMRMNEEILSCPISNLELWFFPEFLILYTSYKIKPWYIPIKFLLLNLNVNENASGNKNKKTTGKKKRDIFISIFSNEKKYLELEKQNQVEKEYGIKTDFESTLSNQEKDIEENYAVSKMKKNKKQSRTNMEAEFDFLLKRYLLFQLRWDDSLNKKMIDNIKVYCSLLRPINLREITIASIQRGEINLDLLMIQKNFILTELIKKGILLIEPVRLSRKNEGQFIMYQTIGISLVHKSKHTINQRYREKGLVDTKNFDEFISKHQKMTENRDKNHYDLFVPETILSPRHRRELRILICFNSRNRNGIPSNAFFCNENKVKSPVLNKSKINQNNIIRLKFFLWPNYRLEDFACMNRYWFDTNNGSRFSMVRIHMYPQFKNELKRVLKKSEIRIDFISRTILHI</sequence>